<evidence type="ECO:0000255" key="1">
    <source>
        <dbReference type="HAMAP-Rule" id="MF_00159"/>
    </source>
</evidence>
<proteinExistence type="inferred from homology"/>
<comment type="function">
    <text evidence="1">Converts 2C-methyl-D-erythritol 2,4-cyclodiphosphate (ME-2,4cPP) into 1-hydroxy-2-methyl-2-(E)-butenyl 4-diphosphate.</text>
</comment>
<comment type="catalytic activity">
    <reaction evidence="1">
        <text>(2E)-4-hydroxy-3-methylbut-2-enyl diphosphate + oxidized [flavodoxin] + H2O + 2 H(+) = 2-C-methyl-D-erythritol 2,4-cyclic diphosphate + reduced [flavodoxin]</text>
        <dbReference type="Rhea" id="RHEA:43604"/>
        <dbReference type="Rhea" id="RHEA-COMP:10622"/>
        <dbReference type="Rhea" id="RHEA-COMP:10623"/>
        <dbReference type="ChEBI" id="CHEBI:15377"/>
        <dbReference type="ChEBI" id="CHEBI:15378"/>
        <dbReference type="ChEBI" id="CHEBI:57618"/>
        <dbReference type="ChEBI" id="CHEBI:58210"/>
        <dbReference type="ChEBI" id="CHEBI:58483"/>
        <dbReference type="ChEBI" id="CHEBI:128753"/>
        <dbReference type="EC" id="1.17.7.3"/>
    </reaction>
</comment>
<comment type="cofactor">
    <cofactor evidence="1">
        <name>[4Fe-4S] cluster</name>
        <dbReference type="ChEBI" id="CHEBI:49883"/>
    </cofactor>
    <text evidence="1">Binds 1 [4Fe-4S] cluster.</text>
</comment>
<comment type="pathway">
    <text evidence="1">Isoprenoid biosynthesis; isopentenyl diphosphate biosynthesis via DXP pathway; isopentenyl diphosphate from 1-deoxy-D-xylulose 5-phosphate: step 5/6.</text>
</comment>
<comment type="similarity">
    <text evidence="1">Belongs to the IspG family.</text>
</comment>
<reference key="1">
    <citation type="journal article" date="2006" name="PLoS Biol.">
        <title>Metabolic complementarity and genomics of the dual bacterial symbiosis of sharpshooters.</title>
        <authorList>
            <person name="Wu D."/>
            <person name="Daugherty S.C."/>
            <person name="Van Aken S.E."/>
            <person name="Pai G.H."/>
            <person name="Watkins K.L."/>
            <person name="Khouri H."/>
            <person name="Tallon L.J."/>
            <person name="Zaborsky J.M."/>
            <person name="Dunbar H.E."/>
            <person name="Tran P.L."/>
            <person name="Moran N.A."/>
            <person name="Eisen J.A."/>
        </authorList>
    </citation>
    <scope>NUCLEOTIDE SEQUENCE [LARGE SCALE GENOMIC DNA]</scope>
</reference>
<sequence length="373" mass="41155">MQNLVSNRRKSKRIYVGNVPIGDGAPIAVQSMTNTQTTNVIATVNQIKALERLGADIVRVSVPTLHAAEQFKLIKEQVDVPLVADIHFDYRIALKVAKYGVNCLRINPGNIGNKKRIRSVVDCARDHHIPIRIGINAGSLEKDLQNKYSKPTPEVLLESALRQIDILDRLNFDQFKVSVKASDVLLAVRSYRLLASQIDQPLHIGITEAGGARSGAVKSAIGIGLLLSEGIGDTLRVSLASDPIEEVKVAFDILKSLRIRTRGINFIACPTCSRQEFDVIGTVKELEQRLEDIVTPMDISIIGCIVNGLGEALMSNIGVTGGPRNSSFYEDGIRQHHRFDNKFIIDQLEARIRAKAMMLEENNKITVINLPKK</sequence>
<gene>
    <name evidence="1" type="primary">ispG</name>
    <name type="ordered locus">BCI_0008</name>
</gene>
<feature type="chain" id="PRO_1000011441" description="4-hydroxy-3-methylbut-2-en-1-yl diphosphate synthase (flavodoxin)">
    <location>
        <begin position="1"/>
        <end position="373"/>
    </location>
</feature>
<feature type="binding site" evidence="1">
    <location>
        <position position="269"/>
    </location>
    <ligand>
        <name>[4Fe-4S] cluster</name>
        <dbReference type="ChEBI" id="CHEBI:49883"/>
    </ligand>
</feature>
<feature type="binding site" evidence="1">
    <location>
        <position position="272"/>
    </location>
    <ligand>
        <name>[4Fe-4S] cluster</name>
        <dbReference type="ChEBI" id="CHEBI:49883"/>
    </ligand>
</feature>
<feature type="binding site" evidence="1">
    <location>
        <position position="304"/>
    </location>
    <ligand>
        <name>[4Fe-4S] cluster</name>
        <dbReference type="ChEBI" id="CHEBI:49883"/>
    </ligand>
</feature>
<feature type="binding site" evidence="1">
    <location>
        <position position="311"/>
    </location>
    <ligand>
        <name>[4Fe-4S] cluster</name>
        <dbReference type="ChEBI" id="CHEBI:49883"/>
    </ligand>
</feature>
<keyword id="KW-0004">4Fe-4S</keyword>
<keyword id="KW-0408">Iron</keyword>
<keyword id="KW-0411">Iron-sulfur</keyword>
<keyword id="KW-0414">Isoprene biosynthesis</keyword>
<keyword id="KW-0479">Metal-binding</keyword>
<keyword id="KW-0560">Oxidoreductase</keyword>
<keyword id="KW-1185">Reference proteome</keyword>
<name>ISPG_BAUCH</name>
<protein>
    <recommendedName>
        <fullName evidence="1">4-hydroxy-3-methylbut-2-en-1-yl diphosphate synthase (flavodoxin)</fullName>
        <ecNumber evidence="1">1.17.7.3</ecNumber>
    </recommendedName>
    <alternativeName>
        <fullName evidence="1">1-hydroxy-2-methyl-2-(E)-butenyl 4-diphosphate synthase</fullName>
    </alternativeName>
</protein>
<accession>Q1LU77</accession>
<organism>
    <name type="scientific">Baumannia cicadellinicola subsp. Homalodisca coagulata</name>
    <dbReference type="NCBI Taxonomy" id="374463"/>
    <lineage>
        <taxon>Bacteria</taxon>
        <taxon>Pseudomonadati</taxon>
        <taxon>Pseudomonadota</taxon>
        <taxon>Gammaproteobacteria</taxon>
        <taxon>Candidatus Palibaumannia</taxon>
    </lineage>
</organism>
<dbReference type="EC" id="1.17.7.3" evidence="1"/>
<dbReference type="EMBL" id="CP000238">
    <property type="protein sequence ID" value="ABF13822.1"/>
    <property type="molecule type" value="Genomic_DNA"/>
</dbReference>
<dbReference type="RefSeq" id="WP_011520220.1">
    <property type="nucleotide sequence ID" value="NC_007984.1"/>
</dbReference>
<dbReference type="SMR" id="Q1LU77"/>
<dbReference type="STRING" id="374463.BCI_0008"/>
<dbReference type="KEGG" id="bci:BCI_0008"/>
<dbReference type="HOGENOM" id="CLU_042258_0_0_6"/>
<dbReference type="OrthoDB" id="9803214at2"/>
<dbReference type="UniPathway" id="UPA00056">
    <property type="reaction ID" value="UER00096"/>
</dbReference>
<dbReference type="Proteomes" id="UP000002427">
    <property type="component" value="Chromosome"/>
</dbReference>
<dbReference type="GO" id="GO:0051539">
    <property type="term" value="F:4 iron, 4 sulfur cluster binding"/>
    <property type="evidence" value="ECO:0007669"/>
    <property type="project" value="UniProtKB-UniRule"/>
</dbReference>
<dbReference type="GO" id="GO:0046429">
    <property type="term" value="F:4-hydroxy-3-methylbut-2-en-1-yl diphosphate synthase activity (ferredoxin)"/>
    <property type="evidence" value="ECO:0007669"/>
    <property type="project" value="UniProtKB-UniRule"/>
</dbReference>
<dbReference type="GO" id="GO:0141197">
    <property type="term" value="F:4-hydroxy-3-methylbut-2-enyl-diphosphate synthase activity (flavodoxin)"/>
    <property type="evidence" value="ECO:0007669"/>
    <property type="project" value="UniProtKB-EC"/>
</dbReference>
<dbReference type="GO" id="GO:0005506">
    <property type="term" value="F:iron ion binding"/>
    <property type="evidence" value="ECO:0007669"/>
    <property type="project" value="InterPro"/>
</dbReference>
<dbReference type="GO" id="GO:0019288">
    <property type="term" value="P:isopentenyl diphosphate biosynthetic process, methylerythritol 4-phosphate pathway"/>
    <property type="evidence" value="ECO:0007669"/>
    <property type="project" value="UniProtKB-UniRule"/>
</dbReference>
<dbReference type="GO" id="GO:0016114">
    <property type="term" value="P:terpenoid biosynthetic process"/>
    <property type="evidence" value="ECO:0007669"/>
    <property type="project" value="InterPro"/>
</dbReference>
<dbReference type="FunFam" id="3.20.20.20:FF:000001">
    <property type="entry name" value="4-hydroxy-3-methylbut-2-en-1-yl diphosphate synthase (flavodoxin)"/>
    <property type="match status" value="1"/>
</dbReference>
<dbReference type="Gene3D" id="3.20.20.20">
    <property type="entry name" value="Dihydropteroate synthase-like"/>
    <property type="match status" value="1"/>
</dbReference>
<dbReference type="Gene3D" id="3.30.413.10">
    <property type="entry name" value="Sulfite Reductase Hemoprotein, domain 1"/>
    <property type="match status" value="1"/>
</dbReference>
<dbReference type="HAMAP" id="MF_00159">
    <property type="entry name" value="IspG"/>
    <property type="match status" value="1"/>
</dbReference>
<dbReference type="InterPro" id="IPR011005">
    <property type="entry name" value="Dihydropteroate_synth-like_sf"/>
</dbReference>
<dbReference type="InterPro" id="IPR016425">
    <property type="entry name" value="IspG_bac"/>
</dbReference>
<dbReference type="InterPro" id="IPR004588">
    <property type="entry name" value="IspG_bac-typ"/>
</dbReference>
<dbReference type="InterPro" id="IPR045854">
    <property type="entry name" value="NO2/SO3_Rdtase_4Fe4S_sf"/>
</dbReference>
<dbReference type="NCBIfam" id="TIGR00612">
    <property type="entry name" value="ispG_gcpE"/>
    <property type="match status" value="1"/>
</dbReference>
<dbReference type="NCBIfam" id="NF001540">
    <property type="entry name" value="PRK00366.1"/>
    <property type="match status" value="1"/>
</dbReference>
<dbReference type="PANTHER" id="PTHR30454">
    <property type="entry name" value="4-HYDROXY-3-METHYLBUT-2-EN-1-YL DIPHOSPHATE SYNTHASE"/>
    <property type="match status" value="1"/>
</dbReference>
<dbReference type="PANTHER" id="PTHR30454:SF0">
    <property type="entry name" value="4-HYDROXY-3-METHYLBUT-2-EN-1-YL DIPHOSPHATE SYNTHASE (FERREDOXIN), CHLOROPLASTIC"/>
    <property type="match status" value="1"/>
</dbReference>
<dbReference type="Pfam" id="PF04551">
    <property type="entry name" value="GcpE"/>
    <property type="match status" value="1"/>
</dbReference>
<dbReference type="PIRSF" id="PIRSF004640">
    <property type="entry name" value="IspG"/>
    <property type="match status" value="1"/>
</dbReference>
<dbReference type="SUPFAM" id="SSF51717">
    <property type="entry name" value="Dihydropteroate synthetase-like"/>
    <property type="match status" value="1"/>
</dbReference>
<dbReference type="SUPFAM" id="SSF56014">
    <property type="entry name" value="Nitrite and sulphite reductase 4Fe-4S domain-like"/>
    <property type="match status" value="1"/>
</dbReference>